<gene>
    <name type="ORF">PHYPADRAFT_163904</name>
</gene>
<dbReference type="EMBL" id="DS544950">
    <property type="protein sequence ID" value="EDQ71764.1"/>
    <property type="molecule type" value="Genomic_DNA"/>
</dbReference>
<dbReference type="RefSeq" id="XP_001763575.1">
    <property type="nucleotide sequence ID" value="XM_001763523.1"/>
</dbReference>
<dbReference type="FunCoup" id="A9SB31">
    <property type="interactions" value="338"/>
</dbReference>
<dbReference type="PaxDb" id="3218-PP1S61_297V6.1"/>
<dbReference type="EnsemblPlants" id="Pp3c11_11330V3.1">
    <property type="protein sequence ID" value="Pp3c11_11330V3.1"/>
    <property type="gene ID" value="Pp3c11_11330"/>
</dbReference>
<dbReference type="EnsemblPlants" id="Pp3c11_11330V3.2">
    <property type="protein sequence ID" value="Pp3c11_11330V3.2"/>
    <property type="gene ID" value="Pp3c11_11330"/>
</dbReference>
<dbReference type="Gramene" id="Pp3c11_11330V3.1">
    <property type="protein sequence ID" value="Pp3c11_11330V3.1"/>
    <property type="gene ID" value="Pp3c11_11330"/>
</dbReference>
<dbReference type="Gramene" id="Pp3c11_11330V3.2">
    <property type="protein sequence ID" value="Pp3c11_11330V3.2"/>
    <property type="gene ID" value="Pp3c11_11330"/>
</dbReference>
<dbReference type="eggNOG" id="ENOG502SF1Y">
    <property type="taxonomic scope" value="Eukaryota"/>
</dbReference>
<dbReference type="HOGENOM" id="CLU_1290852_0_0_1"/>
<dbReference type="InParanoid" id="A9SB31"/>
<dbReference type="OMA" id="NINHMSG"/>
<dbReference type="OrthoDB" id="672180at2759"/>
<dbReference type="Proteomes" id="UP000006727">
    <property type="component" value="Chromosome 11"/>
</dbReference>
<dbReference type="GO" id="GO:0005886">
    <property type="term" value="C:plasma membrane"/>
    <property type="evidence" value="ECO:0007669"/>
    <property type="project" value="UniProtKB-SubCell"/>
</dbReference>
<dbReference type="InterPro" id="IPR006702">
    <property type="entry name" value="CASP_dom"/>
</dbReference>
<dbReference type="PANTHER" id="PTHR33573:SF50">
    <property type="entry name" value="CASP-LIKE PROTEIN 4A3"/>
    <property type="match status" value="1"/>
</dbReference>
<dbReference type="PANTHER" id="PTHR33573">
    <property type="entry name" value="CASP-LIKE PROTEIN 4A4"/>
    <property type="match status" value="1"/>
</dbReference>
<dbReference type="Pfam" id="PF04535">
    <property type="entry name" value="CASP_dom"/>
    <property type="match status" value="1"/>
</dbReference>
<protein>
    <recommendedName>
        <fullName>CASP-like protein UU4</fullName>
        <shortName>PpCASPLUU4</shortName>
    </recommendedName>
</protein>
<accession>A9SB31</accession>
<name>CSPLB_PHYPA</name>
<comment type="subunit">
    <text evidence="1">Homodimer and heterodimers.</text>
</comment>
<comment type="subcellular location">
    <subcellularLocation>
        <location evidence="1">Cell membrane</location>
        <topology evidence="1">Multi-pass membrane protein</topology>
    </subcellularLocation>
</comment>
<comment type="similarity">
    <text evidence="4">Belongs to the Casparian strip membrane proteins (CASP) family.</text>
</comment>
<reference key="1">
    <citation type="journal article" date="2008" name="Science">
        <title>The Physcomitrella genome reveals evolutionary insights into the conquest of land by plants.</title>
        <authorList>
            <person name="Rensing S.A."/>
            <person name="Lang D."/>
            <person name="Zimmer A.D."/>
            <person name="Terry A."/>
            <person name="Salamov A."/>
            <person name="Shapiro H."/>
            <person name="Nishiyama T."/>
            <person name="Perroud P.-F."/>
            <person name="Lindquist E.A."/>
            <person name="Kamisugi Y."/>
            <person name="Tanahashi T."/>
            <person name="Sakakibara K."/>
            <person name="Fujita T."/>
            <person name="Oishi K."/>
            <person name="Shin-I T."/>
            <person name="Kuroki Y."/>
            <person name="Toyoda A."/>
            <person name="Suzuki Y."/>
            <person name="Hashimoto S.-I."/>
            <person name="Yamaguchi K."/>
            <person name="Sugano S."/>
            <person name="Kohara Y."/>
            <person name="Fujiyama A."/>
            <person name="Anterola A."/>
            <person name="Aoki S."/>
            <person name="Ashton N."/>
            <person name="Barbazuk W.B."/>
            <person name="Barker E."/>
            <person name="Bennetzen J.L."/>
            <person name="Blankenship R."/>
            <person name="Cho S.H."/>
            <person name="Dutcher S.K."/>
            <person name="Estelle M."/>
            <person name="Fawcett J.A."/>
            <person name="Gundlach H."/>
            <person name="Hanada K."/>
            <person name="Heyl A."/>
            <person name="Hicks K.A."/>
            <person name="Hughes J."/>
            <person name="Lohr M."/>
            <person name="Mayer K."/>
            <person name="Melkozernov A."/>
            <person name="Murata T."/>
            <person name="Nelson D.R."/>
            <person name="Pils B."/>
            <person name="Prigge M."/>
            <person name="Reiss B."/>
            <person name="Renner T."/>
            <person name="Rombauts S."/>
            <person name="Rushton P.J."/>
            <person name="Sanderfoot A."/>
            <person name="Schween G."/>
            <person name="Shiu S.-H."/>
            <person name="Stueber K."/>
            <person name="Theodoulou F.L."/>
            <person name="Tu H."/>
            <person name="Van de Peer Y."/>
            <person name="Verrier P.J."/>
            <person name="Waters E."/>
            <person name="Wood A."/>
            <person name="Yang L."/>
            <person name="Cove D."/>
            <person name="Cuming A.C."/>
            <person name="Hasebe M."/>
            <person name="Lucas S."/>
            <person name="Mishler B.D."/>
            <person name="Reski R."/>
            <person name="Grigoriev I.V."/>
            <person name="Quatrano R.S."/>
            <person name="Boore J.L."/>
        </authorList>
    </citation>
    <scope>NUCLEOTIDE SEQUENCE [LARGE SCALE GENOMIC DNA]</scope>
    <source>
        <strain>cv. Gransden 2004</strain>
    </source>
</reference>
<reference key="2">
    <citation type="journal article" date="2014" name="Plant Physiol.">
        <title>Functional and evolutionary analysis of the CASPARIAN STRIP MEMBRANE DOMAIN PROTEIN family.</title>
        <authorList>
            <person name="Roppolo D."/>
            <person name="Boeckmann B."/>
            <person name="Pfister A."/>
            <person name="Boutet E."/>
            <person name="Rubio M.C."/>
            <person name="Denervaud-Tendon V."/>
            <person name="Vermeer J.E."/>
            <person name="Gheyselinck J."/>
            <person name="Xenarios I."/>
            <person name="Geldner N."/>
        </authorList>
    </citation>
    <scope>GENE FAMILY</scope>
    <scope>NOMENCLATURE</scope>
</reference>
<evidence type="ECO:0000250" key="1"/>
<evidence type="ECO:0000255" key="2"/>
<evidence type="ECO:0000256" key="3">
    <source>
        <dbReference type="SAM" id="MobiDB-lite"/>
    </source>
</evidence>
<evidence type="ECO:0000305" key="4"/>
<proteinExistence type="evidence at transcript level"/>
<keyword id="KW-1003">Cell membrane</keyword>
<keyword id="KW-0472">Membrane</keyword>
<keyword id="KW-1185">Reference proteome</keyword>
<keyword id="KW-0812">Transmembrane</keyword>
<keyword id="KW-1133">Transmembrane helix</keyword>
<organism>
    <name type="scientific">Physcomitrium patens</name>
    <name type="common">Spreading-leaved earth moss</name>
    <name type="synonym">Physcomitrella patens</name>
    <dbReference type="NCBI Taxonomy" id="3218"/>
    <lineage>
        <taxon>Eukaryota</taxon>
        <taxon>Viridiplantae</taxon>
        <taxon>Streptophyta</taxon>
        <taxon>Embryophyta</taxon>
        <taxon>Bryophyta</taxon>
        <taxon>Bryophytina</taxon>
        <taxon>Bryopsida</taxon>
        <taxon>Funariidae</taxon>
        <taxon>Funariales</taxon>
        <taxon>Funariaceae</taxon>
        <taxon>Physcomitrium</taxon>
    </lineage>
</organism>
<sequence>MYTGQSDHRPEGVGVNPGSPNVMEPGGGVANGAAVTPEGHYSHAPSSALQAVKKNINHMSGLSLGLRVSEFVLSVIAFSLMASAEQNGAVYSTFTSYSFVLAINVLVALYAIGQIILSVMPLVSGSAPKKLYLFITFGCDQLSAFLLMAAGAAGASVAMLINRKGVIDDYGSGCIDGKITVFCAHAEASIAFTFLSFFCVMISSYLGVYNLAPYLIL</sequence>
<feature type="chain" id="PRO_0000391551" description="CASP-like protein UU4">
    <location>
        <begin position="1"/>
        <end position="217"/>
    </location>
</feature>
<feature type="topological domain" description="Cytoplasmic" evidence="2">
    <location>
        <begin position="1"/>
        <end position="61"/>
    </location>
</feature>
<feature type="transmembrane region" description="Helical" evidence="2">
    <location>
        <begin position="62"/>
        <end position="82"/>
    </location>
</feature>
<feature type="topological domain" description="Extracellular" evidence="2">
    <location>
        <begin position="83"/>
        <end position="98"/>
    </location>
</feature>
<feature type="transmembrane region" description="Helical" evidence="2">
    <location>
        <begin position="99"/>
        <end position="119"/>
    </location>
</feature>
<feature type="topological domain" description="Cytoplasmic" evidence="2">
    <location>
        <begin position="120"/>
        <end position="141"/>
    </location>
</feature>
<feature type="transmembrane region" description="Helical" evidence="2">
    <location>
        <begin position="142"/>
        <end position="162"/>
    </location>
</feature>
<feature type="topological domain" description="Extracellular" evidence="2">
    <location>
        <begin position="163"/>
        <end position="187"/>
    </location>
</feature>
<feature type="transmembrane region" description="Helical" evidence="2">
    <location>
        <begin position="188"/>
        <end position="208"/>
    </location>
</feature>
<feature type="topological domain" description="Cytoplasmic" evidence="2">
    <location>
        <begin position="209"/>
        <end position="217"/>
    </location>
</feature>
<feature type="region of interest" description="Disordered" evidence="3">
    <location>
        <begin position="1"/>
        <end position="21"/>
    </location>
</feature>
<feature type="compositionally biased region" description="Basic and acidic residues" evidence="3">
    <location>
        <begin position="1"/>
        <end position="11"/>
    </location>
</feature>